<comment type="function">
    <text evidence="2">Catalyzes the formation of N(7)-methylguanine at position 46 (m7G46) in tRNA.</text>
</comment>
<comment type="catalytic activity">
    <reaction evidence="2">
        <text>guanosine(46) in tRNA + S-adenosyl-L-methionine = N(7)-methylguanosine(46) in tRNA + S-adenosyl-L-homocysteine</text>
        <dbReference type="Rhea" id="RHEA:42708"/>
        <dbReference type="Rhea" id="RHEA-COMP:10188"/>
        <dbReference type="Rhea" id="RHEA-COMP:10189"/>
        <dbReference type="ChEBI" id="CHEBI:57856"/>
        <dbReference type="ChEBI" id="CHEBI:59789"/>
        <dbReference type="ChEBI" id="CHEBI:74269"/>
        <dbReference type="ChEBI" id="CHEBI:74480"/>
        <dbReference type="EC" id="2.1.1.33"/>
    </reaction>
</comment>
<comment type="pathway">
    <text evidence="2">tRNA modification; N(7)-methylguanine-tRNA biosynthesis.</text>
</comment>
<comment type="similarity">
    <text evidence="2">Belongs to the class I-like SAM-binding methyltransferase superfamily. TrmB family.</text>
</comment>
<dbReference type="EC" id="2.1.1.33" evidence="2"/>
<dbReference type="EMBL" id="CP000386">
    <property type="protein sequence ID" value="ABG04973.1"/>
    <property type="molecule type" value="Genomic_DNA"/>
</dbReference>
<dbReference type="RefSeq" id="WP_011564988.1">
    <property type="nucleotide sequence ID" value="NC_008148.1"/>
</dbReference>
<dbReference type="SMR" id="Q1AUF5"/>
<dbReference type="STRING" id="266117.Rxyl_2026"/>
<dbReference type="KEGG" id="rxy:Rxyl_2026"/>
<dbReference type="eggNOG" id="COG0220">
    <property type="taxonomic scope" value="Bacteria"/>
</dbReference>
<dbReference type="HOGENOM" id="CLU_050910_2_0_11"/>
<dbReference type="OrthoDB" id="9802090at2"/>
<dbReference type="PhylomeDB" id="Q1AUF5"/>
<dbReference type="UniPathway" id="UPA00989"/>
<dbReference type="Proteomes" id="UP000006637">
    <property type="component" value="Chromosome"/>
</dbReference>
<dbReference type="GO" id="GO:0043527">
    <property type="term" value="C:tRNA methyltransferase complex"/>
    <property type="evidence" value="ECO:0007669"/>
    <property type="project" value="TreeGrafter"/>
</dbReference>
<dbReference type="GO" id="GO:0008176">
    <property type="term" value="F:tRNA (guanine(46)-N7)-methyltransferase activity"/>
    <property type="evidence" value="ECO:0007669"/>
    <property type="project" value="UniProtKB-UniRule"/>
</dbReference>
<dbReference type="CDD" id="cd02440">
    <property type="entry name" value="AdoMet_MTases"/>
    <property type="match status" value="1"/>
</dbReference>
<dbReference type="Gene3D" id="3.40.50.150">
    <property type="entry name" value="Vaccinia Virus protein VP39"/>
    <property type="match status" value="1"/>
</dbReference>
<dbReference type="HAMAP" id="MF_01057">
    <property type="entry name" value="tRNA_methyltr_TrmB"/>
    <property type="match status" value="1"/>
</dbReference>
<dbReference type="InterPro" id="IPR029063">
    <property type="entry name" value="SAM-dependent_MTases_sf"/>
</dbReference>
<dbReference type="InterPro" id="IPR003358">
    <property type="entry name" value="tRNA_(Gua-N-7)_MeTrfase_Trmb"/>
</dbReference>
<dbReference type="InterPro" id="IPR055361">
    <property type="entry name" value="tRNA_methyltr_TrmB_bact"/>
</dbReference>
<dbReference type="NCBIfam" id="TIGR00091">
    <property type="entry name" value="tRNA (guanosine(46)-N7)-methyltransferase TrmB"/>
    <property type="match status" value="1"/>
</dbReference>
<dbReference type="PANTHER" id="PTHR23417">
    <property type="entry name" value="3-DEOXY-D-MANNO-OCTULOSONIC-ACID TRANSFERASE/TRNA GUANINE-N 7 - -METHYLTRANSFERASE"/>
    <property type="match status" value="1"/>
</dbReference>
<dbReference type="PANTHER" id="PTHR23417:SF14">
    <property type="entry name" value="PENTACOTRIPEPTIDE-REPEAT REGION OF PRORP DOMAIN-CONTAINING PROTEIN"/>
    <property type="match status" value="1"/>
</dbReference>
<dbReference type="Pfam" id="PF02390">
    <property type="entry name" value="Methyltransf_4"/>
    <property type="match status" value="1"/>
</dbReference>
<dbReference type="SUPFAM" id="SSF53335">
    <property type="entry name" value="S-adenosyl-L-methionine-dependent methyltransferases"/>
    <property type="match status" value="1"/>
</dbReference>
<dbReference type="PROSITE" id="PS51625">
    <property type="entry name" value="SAM_MT_TRMB"/>
    <property type="match status" value="1"/>
</dbReference>
<evidence type="ECO:0000250" key="1"/>
<evidence type="ECO:0000255" key="2">
    <source>
        <dbReference type="HAMAP-Rule" id="MF_01057"/>
    </source>
</evidence>
<accession>Q1AUF5</accession>
<organism>
    <name type="scientific">Rubrobacter xylanophilus (strain DSM 9941 / JCM 11954 / NBRC 16129 / PRD-1)</name>
    <dbReference type="NCBI Taxonomy" id="266117"/>
    <lineage>
        <taxon>Bacteria</taxon>
        <taxon>Bacillati</taxon>
        <taxon>Actinomycetota</taxon>
        <taxon>Rubrobacteria</taxon>
        <taxon>Rubrobacterales</taxon>
        <taxon>Rubrobacteraceae</taxon>
        <taxon>Rubrobacter</taxon>
    </lineage>
</organism>
<gene>
    <name evidence="2" type="primary">trmB</name>
    <name type="ordered locus">Rxyl_2026</name>
</gene>
<feature type="chain" id="PRO_0000288218" description="tRNA (guanine-N(7)-)-methyltransferase">
    <location>
        <begin position="1"/>
        <end position="223"/>
    </location>
</feature>
<feature type="active site" evidence="1">
    <location>
        <position position="130"/>
    </location>
</feature>
<feature type="binding site" evidence="2">
    <location>
        <position position="56"/>
    </location>
    <ligand>
        <name>S-adenosyl-L-methionine</name>
        <dbReference type="ChEBI" id="CHEBI:59789"/>
    </ligand>
</feature>
<feature type="binding site" evidence="2">
    <location>
        <position position="81"/>
    </location>
    <ligand>
        <name>S-adenosyl-L-methionine</name>
        <dbReference type="ChEBI" id="CHEBI:59789"/>
    </ligand>
</feature>
<feature type="binding site" evidence="2">
    <location>
        <position position="108"/>
    </location>
    <ligand>
        <name>S-adenosyl-L-methionine</name>
        <dbReference type="ChEBI" id="CHEBI:59789"/>
    </ligand>
</feature>
<feature type="binding site" evidence="2">
    <location>
        <position position="130"/>
    </location>
    <ligand>
        <name>S-adenosyl-L-methionine</name>
        <dbReference type="ChEBI" id="CHEBI:59789"/>
    </ligand>
</feature>
<feature type="binding site" evidence="2">
    <location>
        <position position="134"/>
    </location>
    <ligand>
        <name>substrate</name>
    </ligand>
</feature>
<feature type="binding site" evidence="2">
    <location>
        <position position="166"/>
    </location>
    <ligand>
        <name>substrate</name>
    </ligand>
</feature>
<proteinExistence type="inferred from homology"/>
<name>TRMB_RUBXD</name>
<protein>
    <recommendedName>
        <fullName evidence="2">tRNA (guanine-N(7)-)-methyltransferase</fullName>
        <ecNumber evidence="2">2.1.1.33</ecNumber>
    </recommendedName>
    <alternativeName>
        <fullName evidence="2">tRNA (guanine(46)-N(7))-methyltransferase</fullName>
    </alternativeName>
    <alternativeName>
        <fullName evidence="2">tRNA(m7G46)-methyltransferase</fullName>
    </alternativeName>
</protein>
<reference key="1">
    <citation type="submission" date="2006-06" db="EMBL/GenBank/DDBJ databases">
        <title>Complete sequence of Rubrobacter xylanophilus DSM 9941.</title>
        <authorList>
            <consortium name="US DOE Joint Genome Institute"/>
            <person name="Copeland A."/>
            <person name="Lucas S."/>
            <person name="Lapidus A."/>
            <person name="Barry K."/>
            <person name="Detter J.C."/>
            <person name="Glavina del Rio T."/>
            <person name="Hammon N."/>
            <person name="Israni S."/>
            <person name="Dalin E."/>
            <person name="Tice H."/>
            <person name="Pitluck S."/>
            <person name="Munk A.C."/>
            <person name="Brettin T."/>
            <person name="Bruce D."/>
            <person name="Han C."/>
            <person name="Tapia R."/>
            <person name="Gilna P."/>
            <person name="Schmutz J."/>
            <person name="Larimer F."/>
            <person name="Land M."/>
            <person name="Hauser L."/>
            <person name="Kyrpides N."/>
            <person name="Lykidis A."/>
            <person name="da Costa M.S."/>
            <person name="Rainey F.A."/>
            <person name="Empadinhas N."/>
            <person name="Jolivet E."/>
            <person name="Battista J.R."/>
            <person name="Richardson P."/>
        </authorList>
    </citation>
    <scope>NUCLEOTIDE SEQUENCE [LARGE SCALE GENOMIC DNA]</scope>
    <source>
        <strain>DSM 9941 / JCM 11954 / NBRC 16129 / PRD-1</strain>
    </source>
</reference>
<sequence length="223" mass="26541">MTRRKLGRMKVRPPDPETAQRYLLRFTGRQLYHEAERLPGLSSPELFGDQRPLELDVGCGTGEYICHLARSDPEANFVGVDLHLKSLHKAIRRAEEANLQNIKFICADFRQMYPLLRPSALRAVYLHFPDPGIKPRYRKRRLFNERFLEEMHRAVVPGGRMSLVTDDEDYFRQMLELIERDGRWRRAHEEPYLTGFDPPVKSRFQKMWERRGRTIYRFELVRP</sequence>
<keyword id="KW-0489">Methyltransferase</keyword>
<keyword id="KW-1185">Reference proteome</keyword>
<keyword id="KW-0949">S-adenosyl-L-methionine</keyword>
<keyword id="KW-0808">Transferase</keyword>
<keyword id="KW-0819">tRNA processing</keyword>